<dbReference type="EC" id="2.7.7.6" evidence="1"/>
<dbReference type="EMBL" id="EF614270">
    <property type="protein sequence ID" value="ABQ81483.1"/>
    <property type="molecule type" value="Genomic_DNA"/>
</dbReference>
<dbReference type="RefSeq" id="YP_001542479.1">
    <property type="nucleotide sequence ID" value="NC_009962.1"/>
</dbReference>
<dbReference type="SMR" id="A8SED5"/>
<dbReference type="GeneID" id="5729478"/>
<dbReference type="GO" id="GO:0009507">
    <property type="term" value="C:chloroplast"/>
    <property type="evidence" value="ECO:0007669"/>
    <property type="project" value="UniProtKB-SubCell"/>
</dbReference>
<dbReference type="GO" id="GO:0000428">
    <property type="term" value="C:DNA-directed RNA polymerase complex"/>
    <property type="evidence" value="ECO:0007669"/>
    <property type="project" value="UniProtKB-KW"/>
</dbReference>
<dbReference type="GO" id="GO:0005739">
    <property type="term" value="C:mitochondrion"/>
    <property type="evidence" value="ECO:0007669"/>
    <property type="project" value="GOC"/>
</dbReference>
<dbReference type="GO" id="GO:0003677">
    <property type="term" value="F:DNA binding"/>
    <property type="evidence" value="ECO:0007669"/>
    <property type="project" value="UniProtKB-UniRule"/>
</dbReference>
<dbReference type="GO" id="GO:0003899">
    <property type="term" value="F:DNA-directed RNA polymerase activity"/>
    <property type="evidence" value="ECO:0007669"/>
    <property type="project" value="UniProtKB-UniRule"/>
</dbReference>
<dbReference type="GO" id="GO:0046983">
    <property type="term" value="F:protein dimerization activity"/>
    <property type="evidence" value="ECO:0007669"/>
    <property type="project" value="InterPro"/>
</dbReference>
<dbReference type="GO" id="GO:0006351">
    <property type="term" value="P:DNA-templated transcription"/>
    <property type="evidence" value="ECO:0007669"/>
    <property type="project" value="UniProtKB-UniRule"/>
</dbReference>
<dbReference type="CDD" id="cd06928">
    <property type="entry name" value="RNAP_alpha_NTD"/>
    <property type="match status" value="1"/>
</dbReference>
<dbReference type="FunFam" id="1.10.150.20:FF:000021">
    <property type="entry name" value="DNA-directed RNA polymerase subunit alpha"/>
    <property type="match status" value="1"/>
</dbReference>
<dbReference type="FunFam" id="2.170.120.12:FF:000001">
    <property type="entry name" value="DNA-directed RNA polymerase subunit alpha"/>
    <property type="match status" value="1"/>
</dbReference>
<dbReference type="FunFam" id="3.30.1360.10:FF:000039">
    <property type="entry name" value="DNA-directed RNA polymerase subunit alpha"/>
    <property type="match status" value="1"/>
</dbReference>
<dbReference type="Gene3D" id="1.10.150.20">
    <property type="entry name" value="5' to 3' exonuclease, C-terminal subdomain"/>
    <property type="match status" value="1"/>
</dbReference>
<dbReference type="Gene3D" id="2.170.120.12">
    <property type="entry name" value="DNA-directed RNA polymerase, insert domain"/>
    <property type="match status" value="1"/>
</dbReference>
<dbReference type="Gene3D" id="3.30.1360.10">
    <property type="entry name" value="RNA polymerase, RBP11-like subunit"/>
    <property type="match status" value="1"/>
</dbReference>
<dbReference type="HAMAP" id="MF_00059">
    <property type="entry name" value="RNApol_bact_RpoA"/>
    <property type="match status" value="1"/>
</dbReference>
<dbReference type="InterPro" id="IPR011262">
    <property type="entry name" value="DNA-dir_RNA_pol_insert"/>
</dbReference>
<dbReference type="InterPro" id="IPR011263">
    <property type="entry name" value="DNA-dir_RNA_pol_RpoA/D/Rpb3"/>
</dbReference>
<dbReference type="InterPro" id="IPR011773">
    <property type="entry name" value="DNA-dir_RpoA"/>
</dbReference>
<dbReference type="InterPro" id="IPR036603">
    <property type="entry name" value="RBP11-like"/>
</dbReference>
<dbReference type="InterPro" id="IPR011260">
    <property type="entry name" value="RNAP_asu_C"/>
</dbReference>
<dbReference type="InterPro" id="IPR036643">
    <property type="entry name" value="RNApol_insert_sf"/>
</dbReference>
<dbReference type="NCBIfam" id="TIGR02027">
    <property type="entry name" value="rpoA"/>
    <property type="match status" value="1"/>
</dbReference>
<dbReference type="Pfam" id="PF01000">
    <property type="entry name" value="RNA_pol_A_bac"/>
    <property type="match status" value="1"/>
</dbReference>
<dbReference type="Pfam" id="PF03118">
    <property type="entry name" value="RNA_pol_A_CTD"/>
    <property type="match status" value="1"/>
</dbReference>
<dbReference type="Pfam" id="PF01193">
    <property type="entry name" value="RNA_pol_L"/>
    <property type="match status" value="1"/>
</dbReference>
<dbReference type="SMART" id="SM00662">
    <property type="entry name" value="RPOLD"/>
    <property type="match status" value="1"/>
</dbReference>
<dbReference type="SUPFAM" id="SSF47789">
    <property type="entry name" value="C-terminal domain of RNA polymerase alpha subunit"/>
    <property type="match status" value="1"/>
</dbReference>
<dbReference type="SUPFAM" id="SSF56553">
    <property type="entry name" value="Insert subdomain of RNA polymerase alpha subunit"/>
    <property type="match status" value="1"/>
</dbReference>
<dbReference type="SUPFAM" id="SSF55257">
    <property type="entry name" value="RBP11-like subunits of RNA polymerase"/>
    <property type="match status" value="1"/>
</dbReference>
<keyword id="KW-0150">Chloroplast</keyword>
<keyword id="KW-0240">DNA-directed RNA polymerase</keyword>
<keyword id="KW-0548">Nucleotidyltransferase</keyword>
<keyword id="KW-0934">Plastid</keyword>
<keyword id="KW-0804">Transcription</keyword>
<keyword id="KW-0808">Transferase</keyword>
<proteinExistence type="inferred from homology"/>
<reference key="1">
    <citation type="journal article" date="2007" name="Proc. Natl. Acad. Sci. U.S.A.">
        <title>Using plastid genome-scale data to resolve enigmatic relationships among basal angiosperms.</title>
        <authorList>
            <person name="Moore M.J."/>
            <person name="Bell C.D."/>
            <person name="Soltis P.S."/>
            <person name="Soltis D.E."/>
        </authorList>
    </citation>
    <scope>NUCLEOTIDE SEQUENCE [LARGE SCALE GENOMIC DNA]</scope>
</reference>
<feature type="chain" id="PRO_0000323665" description="DNA-directed RNA polymerase subunit alpha">
    <location>
        <begin position="1"/>
        <end position="337"/>
    </location>
</feature>
<feature type="region of interest" description="Alpha N-terminal domain (alpha-NTD)" evidence="1">
    <location>
        <begin position="1"/>
        <end position="233"/>
    </location>
</feature>
<feature type="region of interest" description="Alpha C-terminal domain (alpha-CTD)" evidence="1">
    <location>
        <begin position="266"/>
        <end position="337"/>
    </location>
</feature>
<geneLocation type="chloroplast"/>
<name>RPOA_CERDE</name>
<gene>
    <name evidence="1" type="primary">rpoA</name>
</gene>
<evidence type="ECO:0000255" key="1">
    <source>
        <dbReference type="HAMAP-Rule" id="MF_00059"/>
    </source>
</evidence>
<comment type="function">
    <text evidence="1">DNA-dependent RNA polymerase catalyzes the transcription of DNA into RNA using the four ribonucleoside triphosphates as substrates.</text>
</comment>
<comment type="catalytic activity">
    <reaction evidence="1">
        <text>RNA(n) + a ribonucleoside 5'-triphosphate = RNA(n+1) + diphosphate</text>
        <dbReference type="Rhea" id="RHEA:21248"/>
        <dbReference type="Rhea" id="RHEA-COMP:14527"/>
        <dbReference type="Rhea" id="RHEA-COMP:17342"/>
        <dbReference type="ChEBI" id="CHEBI:33019"/>
        <dbReference type="ChEBI" id="CHEBI:61557"/>
        <dbReference type="ChEBI" id="CHEBI:140395"/>
        <dbReference type="EC" id="2.7.7.6"/>
    </reaction>
</comment>
<comment type="subunit">
    <text evidence="1">In plastids the minimal PEP RNA polymerase catalytic core is composed of four subunits: alpha, beta, beta', and beta''. When a (nuclear-encoded) sigma factor is associated with the core the holoenzyme is formed, which can initiate transcription.</text>
</comment>
<comment type="subcellular location">
    <subcellularLocation>
        <location>Plastid</location>
        <location>Chloroplast</location>
    </subcellularLocation>
</comment>
<comment type="domain">
    <text evidence="1">The N-terminal domain is essential for RNAP assembly and basal transcription, whereas the C-terminal domain is involved in interaction with transcriptional regulators and with upstream promoter elements.</text>
</comment>
<comment type="similarity">
    <text evidence="1">Belongs to the RNA polymerase alpha chain family.</text>
</comment>
<protein>
    <recommendedName>
        <fullName evidence="1">DNA-directed RNA polymerase subunit alpha</fullName>
        <shortName evidence="1">PEP</shortName>
        <ecNumber evidence="1">2.7.7.6</ecNumber>
    </recommendedName>
    <alternativeName>
        <fullName evidence="1">Plastid-encoded RNA polymerase subunit alpha</fullName>
        <shortName evidence="1">RNA polymerase subunit alpha</shortName>
    </alternativeName>
</protein>
<sequence length="337" mass="38665">MVREEVTISTRTLQWKCVESRVDSKRLYYGRFILSPLMKGQADTIGISMRRALLGEIEGTCITRAKFDKVTHEYSTIVGIEESVHEILMNLKEIVLRSNLYGTLDASICVRGPRSVTAQDIISPPSVEIVDTTQHIANLTEPIDLCIGLQIERDRGYRLKTPNNYQDGSYPIDTVFMPVRNANHSIHSYGNGTEKQEILFLEIWTNGSLTPKEALYEASRNLINLFIPFLHAEEQEILLEDSENISTVPLFTFHNELANLKKNKKGIALKCIFIDQLELPSRTYNCLKRSNIHTLFDLLSNSKEDLMRIEHFRVEDVKQILDILQKNFAMNLPKDFF</sequence>
<organism>
    <name type="scientific">Ceratophyllum demersum</name>
    <name type="common">Rigid hornwort</name>
    <name type="synonym">Coontail</name>
    <dbReference type="NCBI Taxonomy" id="4428"/>
    <lineage>
        <taxon>Eukaryota</taxon>
        <taxon>Viridiplantae</taxon>
        <taxon>Streptophyta</taxon>
        <taxon>Embryophyta</taxon>
        <taxon>Tracheophyta</taxon>
        <taxon>Spermatophyta</taxon>
        <taxon>Magnoliopsida</taxon>
        <taxon>Ceratophyllales</taxon>
        <taxon>Ceratophyllaceae</taxon>
        <taxon>Ceratophyllum</taxon>
    </lineage>
</organism>
<accession>A8SED5</accession>